<proteinExistence type="inferred from homology"/>
<gene>
    <name evidence="1" type="primary">rpl20</name>
</gene>
<feature type="chain" id="PRO_0000355524" description="Large ribosomal subunit protein bL20c">
    <location>
        <begin position="1"/>
        <end position="117"/>
    </location>
</feature>
<comment type="function">
    <text evidence="1">Binds directly to 23S ribosomal RNA and is necessary for the in vitro assembly process of the 50S ribosomal subunit. It is not involved in the protein synthesizing functions of that subunit.</text>
</comment>
<comment type="subcellular location">
    <subcellularLocation>
        <location>Plastid</location>
        <location>Chloroplast</location>
    </subcellularLocation>
</comment>
<comment type="similarity">
    <text evidence="1">Belongs to the bacterial ribosomal protein bL20 family.</text>
</comment>
<accession>Q09G23</accession>
<geneLocation type="chloroplast"/>
<reference key="1">
    <citation type="journal article" date="2006" name="BMC Plant Biol.">
        <title>Rapid and accurate pyrosequencing of angiosperm plastid genomes.</title>
        <authorList>
            <person name="Moore M.J."/>
            <person name="Dhingra A."/>
            <person name="Soltis P.S."/>
            <person name="Shaw R."/>
            <person name="Farmerie W.G."/>
            <person name="Folta K.M."/>
            <person name="Soltis D.E."/>
        </authorList>
    </citation>
    <scope>NUCLEOTIDE SEQUENCE [LARGE SCALE GENOMIC DNA]</scope>
</reference>
<evidence type="ECO:0000255" key="1">
    <source>
        <dbReference type="HAMAP-Rule" id="MF_00382"/>
    </source>
</evidence>
<evidence type="ECO:0000305" key="2"/>
<protein>
    <recommendedName>
        <fullName evidence="1">Large ribosomal subunit protein bL20c</fullName>
    </recommendedName>
    <alternativeName>
        <fullName evidence="2">50S ribosomal protein L20, chloroplastic</fullName>
    </alternativeName>
</protein>
<sequence length="117" mass="14202">MTRIRRGYIARRRRTKIRLFASTFRGAHSRLTRTTTQQKMRALVSAHRDRGRQKRNFRRLWITRINAVIRENKVSYSYSRLIHDLYKRQLLLNRKILAQIAISNRNCLYMISNEIIK</sequence>
<organism>
    <name type="scientific">Platanus occidentalis</name>
    <name type="common">Sycamore</name>
    <name type="synonym">American plane tree</name>
    <dbReference type="NCBI Taxonomy" id="4403"/>
    <lineage>
        <taxon>Eukaryota</taxon>
        <taxon>Viridiplantae</taxon>
        <taxon>Streptophyta</taxon>
        <taxon>Embryophyta</taxon>
        <taxon>Tracheophyta</taxon>
        <taxon>Spermatophyta</taxon>
        <taxon>Magnoliopsida</taxon>
        <taxon>Proteales</taxon>
        <taxon>Platanaceae</taxon>
        <taxon>Platanus</taxon>
    </lineage>
</organism>
<name>RK20_PLAOC</name>
<dbReference type="EMBL" id="DQ923116">
    <property type="protein sequence ID" value="ABI49801.1"/>
    <property type="molecule type" value="Genomic_DNA"/>
</dbReference>
<dbReference type="RefSeq" id="YP_740588.1">
    <property type="nucleotide sequence ID" value="NC_008335.1"/>
</dbReference>
<dbReference type="SMR" id="Q09G23"/>
<dbReference type="GeneID" id="4271250"/>
<dbReference type="GO" id="GO:0009507">
    <property type="term" value="C:chloroplast"/>
    <property type="evidence" value="ECO:0007669"/>
    <property type="project" value="UniProtKB-SubCell"/>
</dbReference>
<dbReference type="GO" id="GO:1990904">
    <property type="term" value="C:ribonucleoprotein complex"/>
    <property type="evidence" value="ECO:0007669"/>
    <property type="project" value="UniProtKB-KW"/>
</dbReference>
<dbReference type="GO" id="GO:0005840">
    <property type="term" value="C:ribosome"/>
    <property type="evidence" value="ECO:0007669"/>
    <property type="project" value="UniProtKB-KW"/>
</dbReference>
<dbReference type="GO" id="GO:0019843">
    <property type="term" value="F:rRNA binding"/>
    <property type="evidence" value="ECO:0007669"/>
    <property type="project" value="UniProtKB-UniRule"/>
</dbReference>
<dbReference type="GO" id="GO:0003735">
    <property type="term" value="F:structural constituent of ribosome"/>
    <property type="evidence" value="ECO:0007669"/>
    <property type="project" value="InterPro"/>
</dbReference>
<dbReference type="GO" id="GO:0000027">
    <property type="term" value="P:ribosomal large subunit assembly"/>
    <property type="evidence" value="ECO:0007669"/>
    <property type="project" value="UniProtKB-UniRule"/>
</dbReference>
<dbReference type="GO" id="GO:0006412">
    <property type="term" value="P:translation"/>
    <property type="evidence" value="ECO:0007669"/>
    <property type="project" value="InterPro"/>
</dbReference>
<dbReference type="CDD" id="cd07026">
    <property type="entry name" value="Ribosomal_L20"/>
    <property type="match status" value="1"/>
</dbReference>
<dbReference type="FunFam" id="1.10.1900.20:FF:000001">
    <property type="entry name" value="50S ribosomal protein L20"/>
    <property type="match status" value="1"/>
</dbReference>
<dbReference type="Gene3D" id="6.10.160.10">
    <property type="match status" value="1"/>
</dbReference>
<dbReference type="Gene3D" id="1.10.1900.20">
    <property type="entry name" value="Ribosomal protein L20"/>
    <property type="match status" value="1"/>
</dbReference>
<dbReference type="HAMAP" id="MF_00382">
    <property type="entry name" value="Ribosomal_bL20"/>
    <property type="match status" value="1"/>
</dbReference>
<dbReference type="InterPro" id="IPR005813">
    <property type="entry name" value="Ribosomal_bL20"/>
</dbReference>
<dbReference type="InterPro" id="IPR049946">
    <property type="entry name" value="RIBOSOMAL_L20_CS"/>
</dbReference>
<dbReference type="InterPro" id="IPR035566">
    <property type="entry name" value="Ribosomal_protein_bL20_C"/>
</dbReference>
<dbReference type="NCBIfam" id="TIGR01032">
    <property type="entry name" value="rplT_bact"/>
    <property type="match status" value="1"/>
</dbReference>
<dbReference type="PANTHER" id="PTHR10986">
    <property type="entry name" value="39S RIBOSOMAL PROTEIN L20"/>
    <property type="match status" value="1"/>
</dbReference>
<dbReference type="Pfam" id="PF00453">
    <property type="entry name" value="Ribosomal_L20"/>
    <property type="match status" value="1"/>
</dbReference>
<dbReference type="PRINTS" id="PR00062">
    <property type="entry name" value="RIBOSOMALL20"/>
</dbReference>
<dbReference type="SUPFAM" id="SSF74731">
    <property type="entry name" value="Ribosomal protein L20"/>
    <property type="match status" value="1"/>
</dbReference>
<dbReference type="PROSITE" id="PS00937">
    <property type="entry name" value="RIBOSOMAL_L20"/>
    <property type="match status" value="1"/>
</dbReference>
<keyword id="KW-0150">Chloroplast</keyword>
<keyword id="KW-0934">Plastid</keyword>
<keyword id="KW-0687">Ribonucleoprotein</keyword>
<keyword id="KW-0689">Ribosomal protein</keyword>
<keyword id="KW-0694">RNA-binding</keyword>
<keyword id="KW-0699">rRNA-binding</keyword>